<feature type="chain" id="PRO_0000334468" description="Na(+)/H(+) antiporter NhaA">
    <location>
        <begin position="1"/>
        <end position="394"/>
    </location>
</feature>
<feature type="transmembrane region" description="Helical" evidence="1">
    <location>
        <begin position="14"/>
        <end position="34"/>
    </location>
</feature>
<feature type="transmembrane region" description="Helical" evidence="1">
    <location>
        <begin position="59"/>
        <end position="79"/>
    </location>
</feature>
<feature type="transmembrane region" description="Helical" evidence="1">
    <location>
        <begin position="95"/>
        <end position="115"/>
    </location>
</feature>
<feature type="transmembrane region" description="Helical" evidence="1">
    <location>
        <begin position="125"/>
        <end position="145"/>
    </location>
</feature>
<feature type="transmembrane region" description="Helical" evidence="1">
    <location>
        <begin position="154"/>
        <end position="174"/>
    </location>
</feature>
<feature type="transmembrane region" description="Helical" evidence="1">
    <location>
        <begin position="179"/>
        <end position="199"/>
    </location>
</feature>
<feature type="transmembrane region" description="Helical" evidence="1">
    <location>
        <begin position="213"/>
        <end position="233"/>
    </location>
</feature>
<feature type="transmembrane region" description="Helical" evidence="1">
    <location>
        <begin position="254"/>
        <end position="274"/>
    </location>
</feature>
<feature type="transmembrane region" description="Helical" evidence="1">
    <location>
        <begin position="292"/>
        <end position="312"/>
    </location>
</feature>
<feature type="transmembrane region" description="Helical" evidence="1">
    <location>
        <begin position="328"/>
        <end position="348"/>
    </location>
</feature>
<feature type="transmembrane region" description="Helical" evidence="1">
    <location>
        <begin position="363"/>
        <end position="383"/>
    </location>
</feature>
<comment type="function">
    <text evidence="1">Na(+)/H(+) antiporter that extrudes sodium in exchange for external protons.</text>
</comment>
<comment type="catalytic activity">
    <reaction evidence="1">
        <text>Na(+)(in) + 2 H(+)(out) = Na(+)(out) + 2 H(+)(in)</text>
        <dbReference type="Rhea" id="RHEA:29251"/>
        <dbReference type="ChEBI" id="CHEBI:15378"/>
        <dbReference type="ChEBI" id="CHEBI:29101"/>
    </reaction>
    <physiologicalReaction direction="left-to-right" evidence="1">
        <dbReference type="Rhea" id="RHEA:29252"/>
    </physiologicalReaction>
</comment>
<comment type="subcellular location">
    <subcellularLocation>
        <location evidence="1">Cell inner membrane</location>
        <topology evidence="1">Multi-pass membrane protein</topology>
    </subcellularLocation>
</comment>
<comment type="similarity">
    <text evidence="1">Belongs to the NhaA Na(+)/H(+) (TC 2.A.33) antiporter family.</text>
</comment>
<accession>Q1C0J7</accession>
<keyword id="KW-0050">Antiport</keyword>
<keyword id="KW-0997">Cell inner membrane</keyword>
<keyword id="KW-1003">Cell membrane</keyword>
<keyword id="KW-0406">Ion transport</keyword>
<keyword id="KW-0472">Membrane</keyword>
<keyword id="KW-0915">Sodium</keyword>
<keyword id="KW-0739">Sodium transport</keyword>
<keyword id="KW-0812">Transmembrane</keyword>
<keyword id="KW-1133">Transmembrane helix</keyword>
<keyword id="KW-0813">Transport</keyword>
<reference key="1">
    <citation type="journal article" date="2006" name="J. Bacteriol.">
        <title>Complete genome sequence of Yersinia pestis strains Antiqua and Nepal516: evidence of gene reduction in an emerging pathogen.</title>
        <authorList>
            <person name="Chain P.S.G."/>
            <person name="Hu P."/>
            <person name="Malfatti S.A."/>
            <person name="Radnedge L."/>
            <person name="Larimer F."/>
            <person name="Vergez L.M."/>
            <person name="Worsham P."/>
            <person name="Chu M.C."/>
            <person name="Andersen G.L."/>
        </authorList>
    </citation>
    <scope>NUCLEOTIDE SEQUENCE [LARGE SCALE GENOMIC DNA]</scope>
    <source>
        <strain>Antiqua</strain>
    </source>
</reference>
<proteinExistence type="inferred from homology"/>
<gene>
    <name evidence="1" type="primary">nhaA</name>
    <name type="ordered locus">YPA_4064</name>
</gene>
<organism>
    <name type="scientific">Yersinia pestis bv. Antiqua (strain Antiqua)</name>
    <dbReference type="NCBI Taxonomy" id="360102"/>
    <lineage>
        <taxon>Bacteria</taxon>
        <taxon>Pseudomonadati</taxon>
        <taxon>Pseudomonadota</taxon>
        <taxon>Gammaproteobacteria</taxon>
        <taxon>Enterobacterales</taxon>
        <taxon>Yersiniaceae</taxon>
        <taxon>Yersinia</taxon>
    </lineage>
</organism>
<evidence type="ECO:0000255" key="1">
    <source>
        <dbReference type="HAMAP-Rule" id="MF_01844"/>
    </source>
</evidence>
<dbReference type="EMBL" id="CP000308">
    <property type="protein sequence ID" value="ABG16025.1"/>
    <property type="molecule type" value="Genomic_DNA"/>
</dbReference>
<dbReference type="RefSeq" id="WP_002220711.1">
    <property type="nucleotide sequence ID" value="NZ_CP009906.1"/>
</dbReference>
<dbReference type="SMR" id="Q1C0J7"/>
<dbReference type="GeneID" id="57974139"/>
<dbReference type="KEGG" id="ypa:YPA_4064"/>
<dbReference type="Proteomes" id="UP000001971">
    <property type="component" value="Chromosome"/>
</dbReference>
<dbReference type="GO" id="GO:0005886">
    <property type="term" value="C:plasma membrane"/>
    <property type="evidence" value="ECO:0007669"/>
    <property type="project" value="UniProtKB-SubCell"/>
</dbReference>
<dbReference type="GO" id="GO:0015385">
    <property type="term" value="F:sodium:proton antiporter activity"/>
    <property type="evidence" value="ECO:0007669"/>
    <property type="project" value="TreeGrafter"/>
</dbReference>
<dbReference type="GO" id="GO:0006885">
    <property type="term" value="P:regulation of pH"/>
    <property type="evidence" value="ECO:0007669"/>
    <property type="project" value="InterPro"/>
</dbReference>
<dbReference type="Gene3D" id="1.20.1530.10">
    <property type="entry name" value="Na+/H+ antiporter like domain"/>
    <property type="match status" value="1"/>
</dbReference>
<dbReference type="HAMAP" id="MF_01844">
    <property type="entry name" value="NhaA"/>
    <property type="match status" value="1"/>
</dbReference>
<dbReference type="InterPro" id="IPR023171">
    <property type="entry name" value="Na/H_antiporter_dom_sf"/>
</dbReference>
<dbReference type="InterPro" id="IPR004670">
    <property type="entry name" value="NhaA"/>
</dbReference>
<dbReference type="NCBIfam" id="TIGR00773">
    <property type="entry name" value="NhaA"/>
    <property type="match status" value="1"/>
</dbReference>
<dbReference type="NCBIfam" id="NF007111">
    <property type="entry name" value="PRK09560.1"/>
    <property type="match status" value="1"/>
</dbReference>
<dbReference type="NCBIfam" id="NF007112">
    <property type="entry name" value="PRK09561.1"/>
    <property type="match status" value="1"/>
</dbReference>
<dbReference type="PANTHER" id="PTHR30341:SF0">
    <property type="entry name" value="NA(+)_H(+) ANTIPORTER NHAA"/>
    <property type="match status" value="1"/>
</dbReference>
<dbReference type="PANTHER" id="PTHR30341">
    <property type="entry name" value="SODIUM ION/PROTON ANTIPORTER NHAA-RELATED"/>
    <property type="match status" value="1"/>
</dbReference>
<dbReference type="Pfam" id="PF06965">
    <property type="entry name" value="Na_H_antiport_1"/>
    <property type="match status" value="1"/>
</dbReference>
<sequence>MTNIIRQFLRQEAAGGLILIIAAAIALLMANSALQGVYQSFLDIPVSIKIASLDISKPLLLWINDGLMAVFFLMIGLEVKRELMEGSLAGRDKAVFPAIAALGGMLAPALIYLLFNGADEVTRQGWAIPAATDIAFALGVMALLGNRVPTGLKVFLLALAIIDDLGVIIIIALFYTQQVSLQSLGIAAAAIALLAYMNWRGVGKTSAYLLVGLVLWVCILKSGVHATLAGVIVGFMIPLHTQDQRSPSESLEHGLHPWVAYLILPLFAFANAGVSLQGVSLSGLTSLLPMGIATGLFIGKPLGIFTFSWLAVKLGIAKLPDAINFKQIFAVSVLCGIGFTMSIFIASLAFEGTDIALTTYSKLGILLGSTTAAVVGYSLLRLVLPARRKAVNVR</sequence>
<protein>
    <recommendedName>
        <fullName evidence="1">Na(+)/H(+) antiporter NhaA</fullName>
    </recommendedName>
    <alternativeName>
        <fullName evidence="1">Sodium/proton antiporter NhaA</fullName>
    </alternativeName>
</protein>
<name>NHAA_YERPA</name>